<feature type="chain" id="PRO_0000061632" description="Cytochrome b">
    <location>
        <begin position="1"/>
        <end position="393"/>
    </location>
</feature>
<feature type="transmembrane region" description="Helical" evidence="2">
    <location>
        <begin position="33"/>
        <end position="53"/>
    </location>
</feature>
<feature type="transmembrane region" description="Helical" evidence="2">
    <location>
        <begin position="77"/>
        <end position="98"/>
    </location>
</feature>
<feature type="transmembrane region" description="Helical" evidence="2">
    <location>
        <begin position="113"/>
        <end position="133"/>
    </location>
</feature>
<feature type="transmembrane region" description="Helical" evidence="2">
    <location>
        <begin position="178"/>
        <end position="198"/>
    </location>
</feature>
<feature type="transmembrane region" description="Helical" evidence="2">
    <location>
        <begin position="226"/>
        <end position="246"/>
    </location>
</feature>
<feature type="transmembrane region" description="Helical" evidence="2">
    <location>
        <begin position="288"/>
        <end position="308"/>
    </location>
</feature>
<feature type="transmembrane region" description="Helical" evidence="2">
    <location>
        <begin position="320"/>
        <end position="340"/>
    </location>
</feature>
<feature type="transmembrane region" description="Helical" evidence="2">
    <location>
        <begin position="347"/>
        <end position="367"/>
    </location>
</feature>
<feature type="binding site" description="axial binding residue" evidence="2">
    <location>
        <position position="83"/>
    </location>
    <ligand>
        <name>heme b</name>
        <dbReference type="ChEBI" id="CHEBI:60344"/>
        <label>b562</label>
    </ligand>
    <ligandPart>
        <name>Fe</name>
        <dbReference type="ChEBI" id="CHEBI:18248"/>
    </ligandPart>
</feature>
<feature type="binding site" description="axial binding residue" evidence="2">
    <location>
        <position position="97"/>
    </location>
    <ligand>
        <name>heme b</name>
        <dbReference type="ChEBI" id="CHEBI:60344"/>
        <label>b566</label>
    </ligand>
    <ligandPart>
        <name>Fe</name>
        <dbReference type="ChEBI" id="CHEBI:18248"/>
    </ligandPart>
</feature>
<feature type="binding site" description="axial binding residue" evidence="2">
    <location>
        <position position="182"/>
    </location>
    <ligand>
        <name>heme b</name>
        <dbReference type="ChEBI" id="CHEBI:60344"/>
        <label>b562</label>
    </ligand>
    <ligandPart>
        <name>Fe</name>
        <dbReference type="ChEBI" id="CHEBI:18248"/>
    </ligandPart>
</feature>
<feature type="binding site" description="axial binding residue" evidence="2">
    <location>
        <position position="196"/>
    </location>
    <ligand>
        <name>heme b</name>
        <dbReference type="ChEBI" id="CHEBI:60344"/>
        <label>b566</label>
    </ligand>
    <ligandPart>
        <name>Fe</name>
        <dbReference type="ChEBI" id="CHEBI:18248"/>
    </ligandPart>
</feature>
<feature type="binding site" evidence="2">
    <location>
        <position position="201"/>
    </location>
    <ligand>
        <name>a ubiquinone</name>
        <dbReference type="ChEBI" id="CHEBI:16389"/>
    </ligand>
</feature>
<gene>
    <name type="primary">mt-cyb</name>
    <name type="synonym">cob</name>
    <name type="synonym">cytb</name>
    <name type="synonym">mtcyb</name>
</gene>
<proteinExistence type="inferred from homology"/>
<comment type="function">
    <text evidence="2">Component of the ubiquinol-cytochrome c reductase complex (complex III or cytochrome b-c1 complex) that is part of the mitochondrial respiratory chain. The b-c1 complex mediates electron transfer from ubiquinol to cytochrome c. Contributes to the generation of a proton gradient across the mitochondrial membrane that is then used for ATP synthesis.</text>
</comment>
<comment type="cofactor">
    <cofactor evidence="2">
        <name>heme b</name>
        <dbReference type="ChEBI" id="CHEBI:60344"/>
    </cofactor>
    <text evidence="2">Binds 2 heme b groups non-covalently.</text>
</comment>
<comment type="subunit">
    <text evidence="2">The cytochrome bc1 complex contains 3 respiratory subunits (MT-CYB, CYC1 and UQCRFS1), 2 core proteins (UQCRC1 and UQCRC2) and probably 6 low-molecular weight proteins.</text>
</comment>
<comment type="subcellular location">
    <subcellularLocation>
        <location evidence="2">Mitochondrion inner membrane</location>
        <topology evidence="2">Multi-pass membrane protein</topology>
    </subcellularLocation>
</comment>
<comment type="miscellaneous">
    <text evidence="1">Heme 1 (or BL or b562) is low-potential and absorbs at about 562 nm, and heme 2 (or BH or b566) is high-potential and absorbs at about 566 nm.</text>
</comment>
<comment type="similarity">
    <text evidence="3 4">Belongs to the cytochrome b family.</text>
</comment>
<comment type="caution">
    <text evidence="2">The full-length protein contains only eight transmembrane helices, not nine as predicted by bioinformatics tools.</text>
</comment>
<name>CYB_SYNMA</name>
<accession>Q8HL81</accession>
<reference key="1">
    <citation type="journal article" date="2003" name="Mol. Phylogenet. Evol.">
        <title>Major patterns of higher teleostean phylogenies: a new perspective based on 100 complete mitochondrial DNA sequences.</title>
        <authorList>
            <person name="Miya M."/>
            <person name="Takeshima H."/>
            <person name="Endo H."/>
            <person name="Ishiguro N.B."/>
            <person name="Inoue J.G."/>
            <person name="Mukai T."/>
            <person name="Satoh T.P."/>
            <person name="Yamaguchi M."/>
            <person name="Kawaguchi A."/>
            <person name="Mabuchi K."/>
            <person name="Shirai S.M."/>
            <person name="Nishida M."/>
        </authorList>
    </citation>
    <scope>NUCLEOTIDE SEQUENCE [GENOMIC DNA]</scope>
</reference>
<organism>
    <name type="scientific">Synbranchus marmoratus</name>
    <name type="common">Marbled swamp eel</name>
    <dbReference type="NCBI Taxonomy" id="181452"/>
    <lineage>
        <taxon>Eukaryota</taxon>
        <taxon>Metazoa</taxon>
        <taxon>Chordata</taxon>
        <taxon>Craniata</taxon>
        <taxon>Vertebrata</taxon>
        <taxon>Euteleostomi</taxon>
        <taxon>Actinopterygii</taxon>
        <taxon>Neopterygii</taxon>
        <taxon>Teleostei</taxon>
        <taxon>Neoteleostei</taxon>
        <taxon>Acanthomorphata</taxon>
        <taxon>Anabantaria</taxon>
        <taxon>Synbranchiformes</taxon>
        <taxon>Synbranchidae</taxon>
        <taxon>Synbranchus</taxon>
    </lineage>
</organism>
<keyword id="KW-0249">Electron transport</keyword>
<keyword id="KW-0349">Heme</keyword>
<keyword id="KW-0408">Iron</keyword>
<keyword id="KW-0472">Membrane</keyword>
<keyword id="KW-0479">Metal-binding</keyword>
<keyword id="KW-0496">Mitochondrion</keyword>
<keyword id="KW-0999">Mitochondrion inner membrane</keyword>
<keyword id="KW-0679">Respiratory chain</keyword>
<keyword id="KW-0812">Transmembrane</keyword>
<keyword id="KW-1133">Transmembrane helix</keyword>
<keyword id="KW-0813">Transport</keyword>
<keyword id="KW-0830">Ubiquinone</keyword>
<dbReference type="EMBL" id="AP004439">
    <property type="protein sequence ID" value="BAC23617.1"/>
    <property type="molecule type" value="Genomic_DNA"/>
</dbReference>
<dbReference type="SMR" id="Q8HL81"/>
<dbReference type="GO" id="GO:0005743">
    <property type="term" value="C:mitochondrial inner membrane"/>
    <property type="evidence" value="ECO:0007669"/>
    <property type="project" value="UniProtKB-SubCell"/>
</dbReference>
<dbReference type="GO" id="GO:0045275">
    <property type="term" value="C:respiratory chain complex III"/>
    <property type="evidence" value="ECO:0007669"/>
    <property type="project" value="InterPro"/>
</dbReference>
<dbReference type="GO" id="GO:0046872">
    <property type="term" value="F:metal ion binding"/>
    <property type="evidence" value="ECO:0007669"/>
    <property type="project" value="UniProtKB-KW"/>
</dbReference>
<dbReference type="GO" id="GO:0008121">
    <property type="term" value="F:ubiquinol-cytochrome-c reductase activity"/>
    <property type="evidence" value="ECO:0007669"/>
    <property type="project" value="InterPro"/>
</dbReference>
<dbReference type="GO" id="GO:0006122">
    <property type="term" value="P:mitochondrial electron transport, ubiquinol to cytochrome c"/>
    <property type="evidence" value="ECO:0007669"/>
    <property type="project" value="TreeGrafter"/>
</dbReference>
<dbReference type="CDD" id="cd00290">
    <property type="entry name" value="cytochrome_b_C"/>
    <property type="match status" value="1"/>
</dbReference>
<dbReference type="CDD" id="cd00284">
    <property type="entry name" value="Cytochrome_b_N"/>
    <property type="match status" value="1"/>
</dbReference>
<dbReference type="FunFam" id="1.20.810.10:FF:000002">
    <property type="entry name" value="Cytochrome b"/>
    <property type="match status" value="1"/>
</dbReference>
<dbReference type="Gene3D" id="1.20.810.10">
    <property type="entry name" value="Cytochrome Bc1 Complex, Chain C"/>
    <property type="match status" value="1"/>
</dbReference>
<dbReference type="InterPro" id="IPR005798">
    <property type="entry name" value="Cyt_b/b6_C"/>
</dbReference>
<dbReference type="InterPro" id="IPR036150">
    <property type="entry name" value="Cyt_b/b6_C_sf"/>
</dbReference>
<dbReference type="InterPro" id="IPR005797">
    <property type="entry name" value="Cyt_b/b6_N"/>
</dbReference>
<dbReference type="InterPro" id="IPR027387">
    <property type="entry name" value="Cytb/b6-like_sf"/>
</dbReference>
<dbReference type="InterPro" id="IPR030689">
    <property type="entry name" value="Cytochrome_b"/>
</dbReference>
<dbReference type="InterPro" id="IPR048260">
    <property type="entry name" value="Cytochrome_b_C_euk/bac"/>
</dbReference>
<dbReference type="InterPro" id="IPR048259">
    <property type="entry name" value="Cytochrome_b_N_euk/bac"/>
</dbReference>
<dbReference type="InterPro" id="IPR016174">
    <property type="entry name" value="Di-haem_cyt_TM"/>
</dbReference>
<dbReference type="PANTHER" id="PTHR19271">
    <property type="entry name" value="CYTOCHROME B"/>
    <property type="match status" value="1"/>
</dbReference>
<dbReference type="PANTHER" id="PTHR19271:SF16">
    <property type="entry name" value="CYTOCHROME B"/>
    <property type="match status" value="1"/>
</dbReference>
<dbReference type="Pfam" id="PF00032">
    <property type="entry name" value="Cytochrom_B_C"/>
    <property type="match status" value="1"/>
</dbReference>
<dbReference type="Pfam" id="PF00033">
    <property type="entry name" value="Cytochrome_B"/>
    <property type="match status" value="1"/>
</dbReference>
<dbReference type="PIRSF" id="PIRSF038885">
    <property type="entry name" value="COB"/>
    <property type="match status" value="1"/>
</dbReference>
<dbReference type="SUPFAM" id="SSF81648">
    <property type="entry name" value="a domain/subunit of cytochrome bc1 complex (Ubiquinol-cytochrome c reductase)"/>
    <property type="match status" value="1"/>
</dbReference>
<dbReference type="SUPFAM" id="SSF81342">
    <property type="entry name" value="Transmembrane di-heme cytochromes"/>
    <property type="match status" value="1"/>
</dbReference>
<dbReference type="PROSITE" id="PS51003">
    <property type="entry name" value="CYTB_CTER"/>
    <property type="match status" value="1"/>
</dbReference>
<dbReference type="PROSITE" id="PS51002">
    <property type="entry name" value="CYTB_NTER"/>
    <property type="match status" value="1"/>
</dbReference>
<sequence length="393" mass="44158">MTSMRKTHPLLKITNDSFIDLPTPSNISALWNFGSLLGLCLMIQILTGFFLAMHYSAEMSFSFASVTHITRDVGYGWFLRNTHANGASILFICMYLHMGRGLYYGSHLYMETWNIGVIMFFLMMTTAFVGYVLPWGQMSLWGATVITNLLSAAPYSGKNLVQWVWGGFSVDAATLTRFFAIHFTLPFITVGLTMLHLLFLHETGSNNPTGLKTEPDKIPFHPYFSYKDVLGFLLLLAALTALALFAPNILSDPDNFNSANPLITPTHIKPEWYFLYAYAILRSVPNKLGGVAALALSILALMVLPFIHTSKMRSLTFRPLSQLVFWLFVANIAILTWIGGMPVEPPFIIIGRIASVSYFTLILILMPLTGWFENKMLNLNCSWQLKMFRASVL</sequence>
<evidence type="ECO:0000250" key="1"/>
<evidence type="ECO:0000250" key="2">
    <source>
        <dbReference type="UniProtKB" id="P00157"/>
    </source>
</evidence>
<evidence type="ECO:0000255" key="3">
    <source>
        <dbReference type="PROSITE-ProRule" id="PRU00967"/>
    </source>
</evidence>
<evidence type="ECO:0000255" key="4">
    <source>
        <dbReference type="PROSITE-ProRule" id="PRU00968"/>
    </source>
</evidence>
<geneLocation type="mitochondrion"/>
<protein>
    <recommendedName>
        <fullName>Cytochrome b</fullName>
    </recommendedName>
    <alternativeName>
        <fullName>Complex III subunit 3</fullName>
    </alternativeName>
    <alternativeName>
        <fullName>Complex III subunit III</fullName>
    </alternativeName>
    <alternativeName>
        <fullName>Cytochrome b-c1 complex subunit 3</fullName>
    </alternativeName>
    <alternativeName>
        <fullName>Ubiquinol-cytochrome-c reductase complex cytochrome b subunit</fullName>
    </alternativeName>
</protein>